<sequence length="335" mass="37446">MRPILLQGHERALTQIRYNKDGDIIFSTAKDQHICAWYAHNGERLGTYHGHQGAIWTVDVDPTTTIIASGAADNTVRLWDVKTGKCLKTWDFNTAVKRVEFNEDATQLLAVTEQRMGFLGTIVVLDINLDVNGPQSDDRALTITCAESKATVAGWSYMSKYIIAGHEDGSVSQYDSKTGELLFNTQVHEPDLQVTDLQWSPDRTYFITASKDKTAKLVNARDLEVMKTYVTDTPLNSASITPKKDFVILGGGQAAMDVTTTSARQGKFEARFYHKIFEEEIGRVRGHFGPLNTVAVDPNGKGYASGGEDGYVRVHQFDKGYFDFTYEVERQVRQQ</sequence>
<comment type="function">
    <text evidence="1">Component of the eukaryotic translation initiation factor 3 (eIF-3) complex, which is involved in protein synthesis of a specialized repertoire of mRNAs and, together with other initiation factors, stimulates binding of mRNA and methionyl-tRNAi to the 40S ribosome. The eIF-3 complex specifically targets and initiates translation of a subset of mRNAs involved in cell proliferation.</text>
</comment>
<comment type="subunit">
    <text evidence="1">Component of the eukaryotic translation initiation factor 3 (eIF-3) complex.</text>
</comment>
<comment type="subcellular location">
    <subcellularLocation>
        <location evidence="1">Cytoplasm</location>
    </subcellularLocation>
</comment>
<comment type="similarity">
    <text evidence="1">Belongs to the eIF-3 subunit I family.</text>
</comment>
<accession>A7EF03</accession>
<proteinExistence type="inferred from homology"/>
<dbReference type="EMBL" id="CH476624">
    <property type="protein sequence ID" value="EDO01419.1"/>
    <property type="molecule type" value="Genomic_DNA"/>
</dbReference>
<dbReference type="RefSeq" id="XP_001595804.1">
    <property type="nucleotide sequence ID" value="XM_001595754.1"/>
</dbReference>
<dbReference type="SMR" id="A7EF03"/>
<dbReference type="FunCoup" id="A7EF03">
    <property type="interactions" value="1036"/>
</dbReference>
<dbReference type="STRING" id="665079.A7EF03"/>
<dbReference type="EnsemblFungi" id="EDO01419">
    <property type="protein sequence ID" value="EDO01419"/>
    <property type="gene ID" value="SS1G_03894"/>
</dbReference>
<dbReference type="GeneID" id="5491593"/>
<dbReference type="KEGG" id="ssl:SS1G_03894"/>
<dbReference type="VEuPathDB" id="FungiDB:sscle_09g072650"/>
<dbReference type="eggNOG" id="KOG0643">
    <property type="taxonomic scope" value="Eukaryota"/>
</dbReference>
<dbReference type="HOGENOM" id="CLU_043845_0_1_1"/>
<dbReference type="InParanoid" id="A7EF03"/>
<dbReference type="OMA" id="VWFSHNG"/>
<dbReference type="OrthoDB" id="24966at2759"/>
<dbReference type="Proteomes" id="UP000001312">
    <property type="component" value="Unassembled WGS sequence"/>
</dbReference>
<dbReference type="GO" id="GO:0016282">
    <property type="term" value="C:eukaryotic 43S preinitiation complex"/>
    <property type="evidence" value="ECO:0007669"/>
    <property type="project" value="UniProtKB-UniRule"/>
</dbReference>
<dbReference type="GO" id="GO:0033290">
    <property type="term" value="C:eukaryotic 48S preinitiation complex"/>
    <property type="evidence" value="ECO:0007669"/>
    <property type="project" value="UniProtKB-UniRule"/>
</dbReference>
<dbReference type="GO" id="GO:0071540">
    <property type="term" value="C:eukaryotic translation initiation factor 3 complex, eIF3e"/>
    <property type="evidence" value="ECO:0007669"/>
    <property type="project" value="EnsemblFungi"/>
</dbReference>
<dbReference type="GO" id="GO:0071541">
    <property type="term" value="C:eukaryotic translation initiation factor 3 complex, eIF3m"/>
    <property type="evidence" value="ECO:0000318"/>
    <property type="project" value="GO_Central"/>
</dbReference>
<dbReference type="GO" id="GO:0034399">
    <property type="term" value="C:nuclear periphery"/>
    <property type="evidence" value="ECO:0007669"/>
    <property type="project" value="EnsemblFungi"/>
</dbReference>
<dbReference type="GO" id="GO:0003723">
    <property type="term" value="F:RNA binding"/>
    <property type="evidence" value="ECO:0000318"/>
    <property type="project" value="GO_Central"/>
</dbReference>
<dbReference type="GO" id="GO:0003743">
    <property type="term" value="F:translation initiation factor activity"/>
    <property type="evidence" value="ECO:0000318"/>
    <property type="project" value="GO_Central"/>
</dbReference>
<dbReference type="GO" id="GO:0002183">
    <property type="term" value="P:cytoplasmic translational initiation"/>
    <property type="evidence" value="ECO:0000318"/>
    <property type="project" value="GO_Central"/>
</dbReference>
<dbReference type="GO" id="GO:0001732">
    <property type="term" value="P:formation of cytoplasmic translation initiation complex"/>
    <property type="evidence" value="ECO:0007669"/>
    <property type="project" value="UniProtKB-UniRule"/>
</dbReference>
<dbReference type="FunFam" id="2.130.10.10:FF:000127">
    <property type="entry name" value="Eukaryotic translation initiation factor 3 subunit I"/>
    <property type="match status" value="1"/>
</dbReference>
<dbReference type="Gene3D" id="2.130.10.10">
    <property type="entry name" value="YVTN repeat-like/Quinoprotein amine dehydrogenase"/>
    <property type="match status" value="1"/>
</dbReference>
<dbReference type="HAMAP" id="MF_03008">
    <property type="entry name" value="eIF3i"/>
    <property type="match status" value="1"/>
</dbReference>
<dbReference type="InterPro" id="IPR027525">
    <property type="entry name" value="eIF3i"/>
</dbReference>
<dbReference type="InterPro" id="IPR015943">
    <property type="entry name" value="WD40/YVTN_repeat-like_dom_sf"/>
</dbReference>
<dbReference type="InterPro" id="IPR019775">
    <property type="entry name" value="WD40_repeat_CS"/>
</dbReference>
<dbReference type="InterPro" id="IPR036322">
    <property type="entry name" value="WD40_repeat_dom_sf"/>
</dbReference>
<dbReference type="InterPro" id="IPR001680">
    <property type="entry name" value="WD40_rpt"/>
</dbReference>
<dbReference type="PANTHER" id="PTHR19877">
    <property type="entry name" value="EUKARYOTIC TRANSLATION INITIATION FACTOR 3 SUBUNIT I"/>
    <property type="match status" value="1"/>
</dbReference>
<dbReference type="PANTHER" id="PTHR19877:SF1">
    <property type="entry name" value="EUKARYOTIC TRANSLATION INITIATION FACTOR 3 SUBUNIT I"/>
    <property type="match status" value="1"/>
</dbReference>
<dbReference type="Pfam" id="PF24805">
    <property type="entry name" value="EIF3I"/>
    <property type="match status" value="1"/>
</dbReference>
<dbReference type="SMART" id="SM00320">
    <property type="entry name" value="WD40"/>
    <property type="match status" value="6"/>
</dbReference>
<dbReference type="SUPFAM" id="SSF50978">
    <property type="entry name" value="WD40 repeat-like"/>
    <property type="match status" value="1"/>
</dbReference>
<dbReference type="PROSITE" id="PS00678">
    <property type="entry name" value="WD_REPEATS_1"/>
    <property type="match status" value="1"/>
</dbReference>
<dbReference type="PROSITE" id="PS50082">
    <property type="entry name" value="WD_REPEATS_2"/>
    <property type="match status" value="3"/>
</dbReference>
<dbReference type="PROSITE" id="PS50294">
    <property type="entry name" value="WD_REPEATS_REGION"/>
    <property type="match status" value="2"/>
</dbReference>
<feature type="chain" id="PRO_0000366903" description="Eukaryotic translation initiation factor 3 subunit I">
    <location>
        <begin position="1"/>
        <end position="335"/>
    </location>
</feature>
<feature type="repeat" description="WD 1">
    <location>
        <begin position="8"/>
        <end position="47"/>
    </location>
</feature>
<feature type="repeat" description="WD 2">
    <location>
        <begin position="50"/>
        <end position="91"/>
    </location>
</feature>
<feature type="repeat" description="WD 3">
    <location>
        <begin position="145"/>
        <end position="184"/>
    </location>
</feature>
<feature type="repeat" description="WD 4">
    <location>
        <begin position="189"/>
        <end position="228"/>
    </location>
</feature>
<feature type="repeat" description="WD 5">
    <location>
        <begin position="286"/>
        <end position="325"/>
    </location>
</feature>
<name>EIF3I_SCLS1</name>
<evidence type="ECO:0000255" key="1">
    <source>
        <dbReference type="HAMAP-Rule" id="MF_03008"/>
    </source>
</evidence>
<gene>
    <name type="primary">tif34</name>
    <name type="ORF">SS1G_03894</name>
</gene>
<organism>
    <name type="scientific">Sclerotinia sclerotiorum (strain ATCC 18683 / 1980 / Ss-1)</name>
    <name type="common">White mold</name>
    <name type="synonym">Whetzelinia sclerotiorum</name>
    <dbReference type="NCBI Taxonomy" id="665079"/>
    <lineage>
        <taxon>Eukaryota</taxon>
        <taxon>Fungi</taxon>
        <taxon>Dikarya</taxon>
        <taxon>Ascomycota</taxon>
        <taxon>Pezizomycotina</taxon>
        <taxon>Leotiomycetes</taxon>
        <taxon>Helotiales</taxon>
        <taxon>Sclerotiniaceae</taxon>
        <taxon>Sclerotinia</taxon>
    </lineage>
</organism>
<reference key="1">
    <citation type="journal article" date="2011" name="PLoS Genet.">
        <title>Genomic analysis of the necrotrophic fungal pathogens Sclerotinia sclerotiorum and Botrytis cinerea.</title>
        <authorList>
            <person name="Amselem J."/>
            <person name="Cuomo C.A."/>
            <person name="van Kan J.A.L."/>
            <person name="Viaud M."/>
            <person name="Benito E.P."/>
            <person name="Couloux A."/>
            <person name="Coutinho P.M."/>
            <person name="de Vries R.P."/>
            <person name="Dyer P.S."/>
            <person name="Fillinger S."/>
            <person name="Fournier E."/>
            <person name="Gout L."/>
            <person name="Hahn M."/>
            <person name="Kohn L."/>
            <person name="Lapalu N."/>
            <person name="Plummer K.M."/>
            <person name="Pradier J.-M."/>
            <person name="Quevillon E."/>
            <person name="Sharon A."/>
            <person name="Simon A."/>
            <person name="ten Have A."/>
            <person name="Tudzynski B."/>
            <person name="Tudzynski P."/>
            <person name="Wincker P."/>
            <person name="Andrew M."/>
            <person name="Anthouard V."/>
            <person name="Beever R.E."/>
            <person name="Beffa R."/>
            <person name="Benoit I."/>
            <person name="Bouzid O."/>
            <person name="Brault B."/>
            <person name="Chen Z."/>
            <person name="Choquer M."/>
            <person name="Collemare J."/>
            <person name="Cotton P."/>
            <person name="Danchin E.G."/>
            <person name="Da Silva C."/>
            <person name="Gautier A."/>
            <person name="Giraud C."/>
            <person name="Giraud T."/>
            <person name="Gonzalez C."/>
            <person name="Grossetete S."/>
            <person name="Gueldener U."/>
            <person name="Henrissat B."/>
            <person name="Howlett B.J."/>
            <person name="Kodira C."/>
            <person name="Kretschmer M."/>
            <person name="Lappartient A."/>
            <person name="Leroch M."/>
            <person name="Levis C."/>
            <person name="Mauceli E."/>
            <person name="Neuveglise C."/>
            <person name="Oeser B."/>
            <person name="Pearson M."/>
            <person name="Poulain J."/>
            <person name="Poussereau N."/>
            <person name="Quesneville H."/>
            <person name="Rascle C."/>
            <person name="Schumacher J."/>
            <person name="Segurens B."/>
            <person name="Sexton A."/>
            <person name="Silva E."/>
            <person name="Sirven C."/>
            <person name="Soanes D.M."/>
            <person name="Talbot N.J."/>
            <person name="Templeton M."/>
            <person name="Yandava C."/>
            <person name="Yarden O."/>
            <person name="Zeng Q."/>
            <person name="Rollins J.A."/>
            <person name="Lebrun M.-H."/>
            <person name="Dickman M."/>
        </authorList>
    </citation>
    <scope>NUCLEOTIDE SEQUENCE [LARGE SCALE GENOMIC DNA]</scope>
    <source>
        <strain>ATCC 18683 / 1980 / Ss-1</strain>
    </source>
</reference>
<protein>
    <recommendedName>
        <fullName evidence="1">Eukaryotic translation initiation factor 3 subunit I</fullName>
        <shortName evidence="1">eIF3i</shortName>
    </recommendedName>
    <alternativeName>
        <fullName evidence="1">Eukaryotic translation initiation factor 3 39 kDa subunit homolog</fullName>
        <shortName evidence="1">eIF-3 39 kDa subunit homolog</shortName>
    </alternativeName>
</protein>
<keyword id="KW-0963">Cytoplasm</keyword>
<keyword id="KW-0396">Initiation factor</keyword>
<keyword id="KW-0648">Protein biosynthesis</keyword>
<keyword id="KW-1185">Reference proteome</keyword>
<keyword id="KW-0677">Repeat</keyword>
<keyword id="KW-0853">WD repeat</keyword>